<feature type="chain" id="PRO_1000165546" description="Small ribosomal subunit protein uS11">
    <location>
        <begin position="1"/>
        <end position="134"/>
    </location>
</feature>
<name>RS11_ACIET</name>
<sequence length="134" mass="14191">MAKSPANNAAQRVRKKVRKNISDGIAHVHASFNNTIITITDRQGNALSWASSGGQGFKGSRKSTPFAAQVASEVAGRAAIEQGIKNLDVEIKGPGPGRESSVRALGALGIRITSISDVTPVPHNGCRPQKRRRI</sequence>
<dbReference type="EMBL" id="CP001392">
    <property type="protein sequence ID" value="ACM31880.1"/>
    <property type="molecule type" value="Genomic_DNA"/>
</dbReference>
<dbReference type="RefSeq" id="WP_011803865.1">
    <property type="nucleotide sequence ID" value="NC_011992.1"/>
</dbReference>
<dbReference type="SMR" id="B9MBW0"/>
<dbReference type="GeneID" id="84683090"/>
<dbReference type="KEGG" id="dia:Dtpsy_0396"/>
<dbReference type="eggNOG" id="COG0100">
    <property type="taxonomic scope" value="Bacteria"/>
</dbReference>
<dbReference type="HOGENOM" id="CLU_072439_5_0_4"/>
<dbReference type="Proteomes" id="UP000000450">
    <property type="component" value="Chromosome"/>
</dbReference>
<dbReference type="GO" id="GO:1990904">
    <property type="term" value="C:ribonucleoprotein complex"/>
    <property type="evidence" value="ECO:0007669"/>
    <property type="project" value="UniProtKB-KW"/>
</dbReference>
<dbReference type="GO" id="GO:0005840">
    <property type="term" value="C:ribosome"/>
    <property type="evidence" value="ECO:0007669"/>
    <property type="project" value="UniProtKB-KW"/>
</dbReference>
<dbReference type="GO" id="GO:0019843">
    <property type="term" value="F:rRNA binding"/>
    <property type="evidence" value="ECO:0007669"/>
    <property type="project" value="UniProtKB-UniRule"/>
</dbReference>
<dbReference type="GO" id="GO:0003735">
    <property type="term" value="F:structural constituent of ribosome"/>
    <property type="evidence" value="ECO:0007669"/>
    <property type="project" value="InterPro"/>
</dbReference>
<dbReference type="GO" id="GO:0006412">
    <property type="term" value="P:translation"/>
    <property type="evidence" value="ECO:0007669"/>
    <property type="project" value="UniProtKB-UniRule"/>
</dbReference>
<dbReference type="FunFam" id="3.30.420.80:FF:000001">
    <property type="entry name" value="30S ribosomal protein S11"/>
    <property type="match status" value="1"/>
</dbReference>
<dbReference type="Gene3D" id="3.30.420.80">
    <property type="entry name" value="Ribosomal protein S11"/>
    <property type="match status" value="1"/>
</dbReference>
<dbReference type="HAMAP" id="MF_01310">
    <property type="entry name" value="Ribosomal_uS11"/>
    <property type="match status" value="1"/>
</dbReference>
<dbReference type="InterPro" id="IPR001971">
    <property type="entry name" value="Ribosomal_uS11"/>
</dbReference>
<dbReference type="InterPro" id="IPR019981">
    <property type="entry name" value="Ribosomal_uS11_bac-type"/>
</dbReference>
<dbReference type="InterPro" id="IPR018102">
    <property type="entry name" value="Ribosomal_uS11_CS"/>
</dbReference>
<dbReference type="InterPro" id="IPR036967">
    <property type="entry name" value="Ribosomal_uS11_sf"/>
</dbReference>
<dbReference type="NCBIfam" id="NF003698">
    <property type="entry name" value="PRK05309.1"/>
    <property type="match status" value="1"/>
</dbReference>
<dbReference type="NCBIfam" id="TIGR03632">
    <property type="entry name" value="uS11_bact"/>
    <property type="match status" value="1"/>
</dbReference>
<dbReference type="PANTHER" id="PTHR11759">
    <property type="entry name" value="40S RIBOSOMAL PROTEIN S14/30S RIBOSOMAL PROTEIN S11"/>
    <property type="match status" value="1"/>
</dbReference>
<dbReference type="Pfam" id="PF00411">
    <property type="entry name" value="Ribosomal_S11"/>
    <property type="match status" value="1"/>
</dbReference>
<dbReference type="PIRSF" id="PIRSF002131">
    <property type="entry name" value="Ribosomal_S11"/>
    <property type="match status" value="1"/>
</dbReference>
<dbReference type="SUPFAM" id="SSF53137">
    <property type="entry name" value="Translational machinery components"/>
    <property type="match status" value="1"/>
</dbReference>
<dbReference type="PROSITE" id="PS00054">
    <property type="entry name" value="RIBOSOMAL_S11"/>
    <property type="match status" value="1"/>
</dbReference>
<protein>
    <recommendedName>
        <fullName evidence="1">Small ribosomal subunit protein uS11</fullName>
    </recommendedName>
    <alternativeName>
        <fullName evidence="2">30S ribosomal protein S11</fullName>
    </alternativeName>
</protein>
<reference key="1">
    <citation type="submission" date="2009-01" db="EMBL/GenBank/DDBJ databases">
        <title>Complete sequence of Diaphorobacter sp. TPSY.</title>
        <authorList>
            <consortium name="US DOE Joint Genome Institute"/>
            <person name="Lucas S."/>
            <person name="Copeland A."/>
            <person name="Lapidus A."/>
            <person name="Glavina del Rio T."/>
            <person name="Tice H."/>
            <person name="Bruce D."/>
            <person name="Goodwin L."/>
            <person name="Pitluck S."/>
            <person name="Chertkov O."/>
            <person name="Brettin T."/>
            <person name="Detter J.C."/>
            <person name="Han C."/>
            <person name="Larimer F."/>
            <person name="Land M."/>
            <person name="Hauser L."/>
            <person name="Kyrpides N."/>
            <person name="Mikhailova N."/>
            <person name="Coates J.D."/>
        </authorList>
    </citation>
    <scope>NUCLEOTIDE SEQUENCE [LARGE SCALE GENOMIC DNA]</scope>
    <source>
        <strain>TPSY</strain>
    </source>
</reference>
<proteinExistence type="inferred from homology"/>
<organism>
    <name type="scientific">Acidovorax ebreus (strain TPSY)</name>
    <name type="common">Diaphorobacter sp. (strain TPSY)</name>
    <dbReference type="NCBI Taxonomy" id="535289"/>
    <lineage>
        <taxon>Bacteria</taxon>
        <taxon>Pseudomonadati</taxon>
        <taxon>Pseudomonadota</taxon>
        <taxon>Betaproteobacteria</taxon>
        <taxon>Burkholderiales</taxon>
        <taxon>Comamonadaceae</taxon>
        <taxon>Diaphorobacter</taxon>
    </lineage>
</organism>
<keyword id="KW-1185">Reference proteome</keyword>
<keyword id="KW-0687">Ribonucleoprotein</keyword>
<keyword id="KW-0689">Ribosomal protein</keyword>
<keyword id="KW-0694">RNA-binding</keyword>
<keyword id="KW-0699">rRNA-binding</keyword>
<accession>B9MBW0</accession>
<evidence type="ECO:0000255" key="1">
    <source>
        <dbReference type="HAMAP-Rule" id="MF_01310"/>
    </source>
</evidence>
<evidence type="ECO:0000305" key="2"/>
<comment type="function">
    <text evidence="1">Located on the platform of the 30S subunit, it bridges several disparate RNA helices of the 16S rRNA. Forms part of the Shine-Dalgarno cleft in the 70S ribosome.</text>
</comment>
<comment type="subunit">
    <text evidence="1">Part of the 30S ribosomal subunit. Interacts with proteins S7 and S18. Binds to IF-3.</text>
</comment>
<comment type="similarity">
    <text evidence="1">Belongs to the universal ribosomal protein uS11 family.</text>
</comment>
<gene>
    <name evidence="1" type="primary">rpsK</name>
    <name type="ordered locus">Dtpsy_0396</name>
</gene>